<sequence>MAGRVKIKQKELIDSTVKNKNVMNLFHEIIGSKGNINFSVVWPKFKKIKQSVYDYISTLSVLEKASVMQNFEDDKKLLELFVQKLWAAYEGYFKYPEIEKYEVEGQVNFNLVPQYVLEKFSQLYRIRINSELVTLILNSCAFMSKYNDYILKKDPYILTITPGLCFSPIPNFEDLNFKHLYNSDKNSQHDKDFIMFILYKLYMAALGVYNAISIPDIDVEDLENIILSSVSQIKKQIPRCKDAFNKIESSVHLLRKNFNTYYSDYVGSGYNPTIIMEQYIKDISQDSKNISPRISYQFRTIIKYYRDMIATKHQTMDPQVLNLVKHVEKKLDMLDREKN</sequence>
<dbReference type="EMBL" id="AY261366">
    <property type="status" value="NOT_ANNOTATED_CDS"/>
    <property type="molecule type" value="Genomic_DNA"/>
</dbReference>
<dbReference type="SMR" id="P0CAN5"/>
<dbReference type="Proteomes" id="UP000000858">
    <property type="component" value="Segment"/>
</dbReference>
<dbReference type="GO" id="GO:0030430">
    <property type="term" value="C:host cell cytoplasm"/>
    <property type="evidence" value="ECO:0007669"/>
    <property type="project" value="UniProtKB-SubCell"/>
</dbReference>
<dbReference type="GO" id="GO:0042025">
    <property type="term" value="C:host cell nucleus"/>
    <property type="evidence" value="ECO:0007669"/>
    <property type="project" value="UniProtKB-SubCell"/>
</dbReference>
<dbReference type="GO" id="GO:0044423">
    <property type="term" value="C:virion component"/>
    <property type="evidence" value="ECO:0007669"/>
    <property type="project" value="UniProtKB-KW"/>
</dbReference>
<name>VFH33_ASFWA</name>
<protein>
    <recommendedName>
        <fullName>Protein H339R</fullName>
        <shortName>pH339R</shortName>
    </recommendedName>
    <alternativeName>
        <fullName>Protein j4R</fullName>
    </alternativeName>
</protein>
<keyword id="KW-1035">Host cytoplasm</keyword>
<keyword id="KW-1048">Host nucleus</keyword>
<keyword id="KW-0945">Host-virus interaction</keyword>
<keyword id="KW-0426">Late protein</keyword>
<keyword id="KW-0946">Virion</keyword>
<accession>P0CAN5</accession>
<organism>
    <name type="scientific">African swine fever virus (isolate Warthog/Namibia/Wart80/1980)</name>
    <name type="common">ASFV</name>
    <dbReference type="NCBI Taxonomy" id="561444"/>
    <lineage>
        <taxon>Viruses</taxon>
        <taxon>Varidnaviria</taxon>
        <taxon>Bamfordvirae</taxon>
        <taxon>Nucleocytoviricota</taxon>
        <taxon>Pokkesviricetes</taxon>
        <taxon>Asfuvirales</taxon>
        <taxon>Asfarviridae</taxon>
        <taxon>Asfivirus</taxon>
        <taxon>African swine fever virus</taxon>
    </lineage>
</organism>
<feature type="chain" id="PRO_0000373773" description="Protein H339R">
    <location>
        <begin position="1"/>
        <end position="339"/>
    </location>
</feature>
<comment type="subunit">
    <text evidence="1">Interacts with NACA (alpha chain of nascent polypeptide-associated complex).</text>
</comment>
<comment type="subcellular location">
    <subcellularLocation>
        <location evidence="2">Host cytoplasm</location>
    </subcellularLocation>
    <subcellularLocation>
        <location evidence="2">Host nucleus</location>
    </subcellularLocation>
    <subcellularLocation>
        <location evidence="2">Virion</location>
    </subcellularLocation>
</comment>
<comment type="induction">
    <text evidence="3">Expressed in the late phase of the viral replicative cycle.</text>
</comment>
<comment type="similarity">
    <text evidence="3">Belongs to the asfivirus H339R family.</text>
</comment>
<gene>
    <name type="ordered locus">War-126</name>
</gene>
<organismHost>
    <name type="scientific">Ornithodoros</name>
    <name type="common">relapsing fever ticks</name>
    <dbReference type="NCBI Taxonomy" id="6937"/>
</organismHost>
<organismHost>
    <name type="scientific">Phacochoerus aethiopicus</name>
    <name type="common">Warthog</name>
    <dbReference type="NCBI Taxonomy" id="85517"/>
</organismHost>
<organismHost>
    <name type="scientific">Phacochoerus africanus</name>
    <name type="common">Warthog</name>
    <dbReference type="NCBI Taxonomy" id="41426"/>
</organismHost>
<organismHost>
    <name type="scientific">Potamochoerus larvatus</name>
    <name type="common">Bushpig</name>
    <dbReference type="NCBI Taxonomy" id="273792"/>
</organismHost>
<organismHost>
    <name type="scientific">Sus scrofa</name>
    <name type="common">Pig</name>
    <dbReference type="NCBI Taxonomy" id="9823"/>
</organismHost>
<evidence type="ECO:0000250" key="1"/>
<evidence type="ECO:0000250" key="2">
    <source>
        <dbReference type="UniProtKB" id="Q65187"/>
    </source>
</evidence>
<evidence type="ECO:0000305" key="3"/>
<proteinExistence type="inferred from homology"/>
<reference key="1">
    <citation type="submission" date="2003-03" db="EMBL/GenBank/DDBJ databases">
        <title>African swine fever virus genomes.</title>
        <authorList>
            <person name="Kutish G.F."/>
            <person name="Rock D.L."/>
        </authorList>
    </citation>
    <scope>NUCLEOTIDE SEQUENCE [LARGE SCALE GENOMIC DNA]</scope>
</reference>